<gene>
    <name type="primary">CLPB2</name>
    <name type="synonym">CLPB4</name>
    <name type="ordered locus">At4g14670</name>
    <name type="ORF">dl3375w</name>
    <name type="ORF">FCAALL.285</name>
</gene>
<sequence>MNDLKFDPNVKLILASARSHAMSLSHGQVTPLHLGVTLISDLTSVFYRAITSAGDGDISAQSVVNVINQSLYKLTKRNLGDTKVGVAVLVISLLEDSQISDVLKEAGVVPEKVKSEVEKLRGEVILRALKTYGTDLVEQAGKLDPVIGRHREIRRVIEVLSRRTKNNPVLIGEPGVGKTAVVEGLAQRILKGDVPINLTGVKLISLEFGAMVAGTTLRGQFEERLKSVLKAVEEAQGKVVLFIDEIHMALGACKASGSTDAAKLLKPMLARGQLRFIGATTLEEYRTHVEKDAAFERRFQQVFVAEPSVPDTISILRGLKEKYEGHHGVRIQDRALVLSAQLSERYITGRRLPDKAIDLVDESCAHVKAQLDIQPEEIDSLERKVMQLEIEIHALEKEKDDKASEARLSEVRKELDDLRDKLEPLTIKYKKEKKIINETRRLKQNRDDLMIALQEAERQHDVPKAAVLKYGAIQEVESAIAKLEKSAKDNVMLTETVGPENIAEVVSRWTGIPVTRLDQNEKKRLISLADKLHERVVGQDEAVKAVAAAILRSRVGLGRPQQPSGSFLFLGPTGVGKTELAKALAEQLFDSENLLVRLDMSEYNDKFSVNKLIGAPPGYVHWS</sequence>
<organism>
    <name type="scientific">Arabidopsis thaliana</name>
    <name type="common">Mouse-ear cress</name>
    <dbReference type="NCBI Taxonomy" id="3702"/>
    <lineage>
        <taxon>Eukaryota</taxon>
        <taxon>Viridiplantae</taxon>
        <taxon>Streptophyta</taxon>
        <taxon>Embryophyta</taxon>
        <taxon>Tracheophyta</taxon>
        <taxon>Spermatophyta</taxon>
        <taxon>Magnoliopsida</taxon>
        <taxon>eudicotyledons</taxon>
        <taxon>Gunneridae</taxon>
        <taxon>Pentapetalae</taxon>
        <taxon>rosids</taxon>
        <taxon>malvids</taxon>
        <taxon>Brassicales</taxon>
        <taxon>Brassicaceae</taxon>
        <taxon>Camelineae</taxon>
        <taxon>Arabidopsis</taxon>
    </lineage>
</organism>
<accession>F4JVJ1</accession>
<accession>O23323</accession>
<feature type="chain" id="PRO_0000412572" description="Putative chaperone protein ClpB2, chloroplastic">
    <location>
        <begin position="1"/>
        <end position="623"/>
    </location>
</feature>
<feature type="domain" description="Clp R" evidence="3">
    <location>
        <begin position="1"/>
        <end position="123"/>
    </location>
</feature>
<feature type="region of interest" description="Repeat 1" evidence="3">
    <location>
        <begin position="6"/>
        <end position="71"/>
    </location>
</feature>
<feature type="region of interest" description="Repeat 2" evidence="3">
    <location>
        <begin position="77"/>
        <end position="123"/>
    </location>
</feature>
<feature type="region of interest" description="I" evidence="1">
    <location>
        <begin position="129"/>
        <end position="375"/>
    </location>
</feature>
<feature type="coiled-coil region" evidence="2">
    <location>
        <begin position="368"/>
        <end position="462"/>
    </location>
</feature>
<feature type="binding site" evidence="2">
    <location>
        <begin position="172"/>
        <end position="179"/>
    </location>
    <ligand>
        <name>ATP</name>
        <dbReference type="ChEBI" id="CHEBI:30616"/>
    </ligand>
</feature>
<feature type="binding site" evidence="2">
    <location>
        <begin position="571"/>
        <end position="578"/>
    </location>
    <ligand>
        <name>ATP</name>
        <dbReference type="ChEBI" id="CHEBI:30616"/>
    </ligand>
</feature>
<dbReference type="EMBL" id="Z97336">
    <property type="protein sequence ID" value="CAB46061.1"/>
    <property type="status" value="ALT_SEQ"/>
    <property type="molecule type" value="Genomic_DNA"/>
</dbReference>
<dbReference type="EMBL" id="AL161539">
    <property type="protein sequence ID" value="CAB78509.1"/>
    <property type="status" value="ALT_SEQ"/>
    <property type="molecule type" value="Genomic_DNA"/>
</dbReference>
<dbReference type="EMBL" id="CP002687">
    <property type="protein sequence ID" value="AEE83473.1"/>
    <property type="molecule type" value="Genomic_DNA"/>
</dbReference>
<dbReference type="PIR" id="G85160">
    <property type="entry name" value="G85160"/>
</dbReference>
<dbReference type="RefSeq" id="NP_567437.1">
    <property type="nucleotide sequence ID" value="NM_117549.1"/>
</dbReference>
<dbReference type="SMR" id="F4JVJ1"/>
<dbReference type="BioGRID" id="12414">
    <property type="interactions" value="1"/>
</dbReference>
<dbReference type="FunCoup" id="F4JVJ1">
    <property type="interactions" value="61"/>
</dbReference>
<dbReference type="STRING" id="3702.F4JVJ1"/>
<dbReference type="PaxDb" id="3702-AT4G14670.1"/>
<dbReference type="EnsemblPlants" id="AT4G14670.1">
    <property type="protein sequence ID" value="AT4G14670.1"/>
    <property type="gene ID" value="AT4G14670"/>
</dbReference>
<dbReference type="GeneID" id="827117"/>
<dbReference type="Gramene" id="AT4G14670.1">
    <property type="protein sequence ID" value="AT4G14670.1"/>
    <property type="gene ID" value="AT4G14670"/>
</dbReference>
<dbReference type="KEGG" id="ath:AT4G14670"/>
<dbReference type="Araport" id="AT4G14670"/>
<dbReference type="TAIR" id="AT4G14670">
    <property type="gene designation" value="CLPB2"/>
</dbReference>
<dbReference type="eggNOG" id="KOG1051">
    <property type="taxonomic scope" value="Eukaryota"/>
</dbReference>
<dbReference type="HOGENOM" id="CLU_005070_2_0_1"/>
<dbReference type="InParanoid" id="F4JVJ1"/>
<dbReference type="OMA" id="HAMSLSH"/>
<dbReference type="PRO" id="PR:F4JVJ1"/>
<dbReference type="Proteomes" id="UP000006548">
    <property type="component" value="Chromosome 4"/>
</dbReference>
<dbReference type="ExpressionAtlas" id="F4JVJ1">
    <property type="expression patterns" value="baseline and differential"/>
</dbReference>
<dbReference type="GO" id="GO:0005524">
    <property type="term" value="F:ATP binding"/>
    <property type="evidence" value="ECO:0007669"/>
    <property type="project" value="UniProtKB-KW"/>
</dbReference>
<dbReference type="GO" id="GO:0016887">
    <property type="term" value="F:ATP hydrolysis activity"/>
    <property type="evidence" value="ECO:0007669"/>
    <property type="project" value="InterPro"/>
</dbReference>
<dbReference type="CDD" id="cd00009">
    <property type="entry name" value="AAA"/>
    <property type="match status" value="1"/>
</dbReference>
<dbReference type="CDD" id="cd19499">
    <property type="entry name" value="RecA-like_ClpB_Hsp104-like"/>
    <property type="match status" value="1"/>
</dbReference>
<dbReference type="FunFam" id="3.40.50.300:FF:000120">
    <property type="entry name" value="ATP-dependent chaperone ClpB"/>
    <property type="match status" value="1"/>
</dbReference>
<dbReference type="FunFam" id="3.40.50.300:FF:000010">
    <property type="entry name" value="Chaperone clpB 1, putative"/>
    <property type="match status" value="1"/>
</dbReference>
<dbReference type="Gene3D" id="1.10.1780.10">
    <property type="entry name" value="Clp, N-terminal domain"/>
    <property type="match status" value="1"/>
</dbReference>
<dbReference type="Gene3D" id="3.40.50.300">
    <property type="entry name" value="P-loop containing nucleotide triphosphate hydrolases"/>
    <property type="match status" value="3"/>
</dbReference>
<dbReference type="InterPro" id="IPR003593">
    <property type="entry name" value="AAA+_ATPase"/>
</dbReference>
<dbReference type="InterPro" id="IPR003959">
    <property type="entry name" value="ATPase_AAA_core"/>
</dbReference>
<dbReference type="InterPro" id="IPR036628">
    <property type="entry name" value="Clp_N_dom_sf"/>
</dbReference>
<dbReference type="InterPro" id="IPR004176">
    <property type="entry name" value="Clp_R_dom"/>
</dbReference>
<dbReference type="InterPro" id="IPR001270">
    <property type="entry name" value="ClpA/B"/>
</dbReference>
<dbReference type="InterPro" id="IPR041546">
    <property type="entry name" value="ClpA/ClpB_AAA_lid"/>
</dbReference>
<dbReference type="InterPro" id="IPR050130">
    <property type="entry name" value="ClpA_ClpB"/>
</dbReference>
<dbReference type="InterPro" id="IPR027417">
    <property type="entry name" value="P-loop_NTPase"/>
</dbReference>
<dbReference type="PANTHER" id="PTHR11638">
    <property type="entry name" value="ATP-DEPENDENT CLP PROTEASE"/>
    <property type="match status" value="1"/>
</dbReference>
<dbReference type="PANTHER" id="PTHR11638:SF18">
    <property type="entry name" value="HEAT SHOCK PROTEIN 104"/>
    <property type="match status" value="1"/>
</dbReference>
<dbReference type="Pfam" id="PF00004">
    <property type="entry name" value="AAA"/>
    <property type="match status" value="1"/>
</dbReference>
<dbReference type="Pfam" id="PF07724">
    <property type="entry name" value="AAA_2"/>
    <property type="match status" value="1"/>
</dbReference>
<dbReference type="Pfam" id="PF17871">
    <property type="entry name" value="AAA_lid_9"/>
    <property type="match status" value="1"/>
</dbReference>
<dbReference type="Pfam" id="PF02861">
    <property type="entry name" value="Clp_N"/>
    <property type="match status" value="1"/>
</dbReference>
<dbReference type="PRINTS" id="PR00300">
    <property type="entry name" value="CLPPROTEASEA"/>
</dbReference>
<dbReference type="SMART" id="SM00382">
    <property type="entry name" value="AAA"/>
    <property type="match status" value="1"/>
</dbReference>
<dbReference type="SUPFAM" id="SSF81923">
    <property type="entry name" value="Double Clp-N motif"/>
    <property type="match status" value="1"/>
</dbReference>
<dbReference type="SUPFAM" id="SSF52540">
    <property type="entry name" value="P-loop containing nucleoside triphosphate hydrolases"/>
    <property type="match status" value="2"/>
</dbReference>
<dbReference type="PROSITE" id="PS51903">
    <property type="entry name" value="CLP_R"/>
    <property type="match status" value="1"/>
</dbReference>
<evidence type="ECO:0000250" key="1"/>
<evidence type="ECO:0000255" key="2"/>
<evidence type="ECO:0000255" key="3">
    <source>
        <dbReference type="PROSITE-ProRule" id="PRU01251"/>
    </source>
</evidence>
<evidence type="ECO:0000305" key="4"/>
<reference key="1">
    <citation type="journal article" date="1998" name="Nature">
        <title>Analysis of 1.9 Mb of contiguous sequence from chromosome 4 of Arabidopsis thaliana.</title>
        <authorList>
            <person name="Bevan M."/>
            <person name="Bancroft I."/>
            <person name="Bent E."/>
            <person name="Love K."/>
            <person name="Goodman H.M."/>
            <person name="Dean C."/>
            <person name="Bergkamp R."/>
            <person name="Dirkse W."/>
            <person name="van Staveren M."/>
            <person name="Stiekema W."/>
            <person name="Drost L."/>
            <person name="Ridley P."/>
            <person name="Hudson S.-A."/>
            <person name="Patel K."/>
            <person name="Murphy G."/>
            <person name="Piffanelli P."/>
            <person name="Wedler H."/>
            <person name="Wedler E."/>
            <person name="Wambutt R."/>
            <person name="Weitzenegger T."/>
            <person name="Pohl T."/>
            <person name="Terryn N."/>
            <person name="Gielen J."/>
            <person name="Villarroel R."/>
            <person name="De Clercq R."/>
            <person name="van Montagu M."/>
            <person name="Lecharny A."/>
            <person name="Aubourg S."/>
            <person name="Gy I."/>
            <person name="Kreis M."/>
            <person name="Lao N."/>
            <person name="Kavanagh T."/>
            <person name="Hempel S."/>
            <person name="Kotter P."/>
            <person name="Entian K.-D."/>
            <person name="Rieger M."/>
            <person name="Schaefer M."/>
            <person name="Funk B."/>
            <person name="Mueller-Auer S."/>
            <person name="Silvey M."/>
            <person name="James R."/>
            <person name="Monfort A."/>
            <person name="Pons A."/>
            <person name="Puigdomenech P."/>
            <person name="Douka A."/>
            <person name="Voukelatou E."/>
            <person name="Milioni D."/>
            <person name="Hatzopoulos P."/>
            <person name="Piravandi E."/>
            <person name="Obermaier B."/>
            <person name="Hilbert H."/>
            <person name="Duesterhoeft A."/>
            <person name="Moores T."/>
            <person name="Jones J.D.G."/>
            <person name="Eneva T."/>
            <person name="Palme K."/>
            <person name="Benes V."/>
            <person name="Rechmann S."/>
            <person name="Ansorge W."/>
            <person name="Cooke R."/>
            <person name="Berger C."/>
            <person name="Delseny M."/>
            <person name="Voet M."/>
            <person name="Volckaert G."/>
            <person name="Mewes H.-W."/>
            <person name="Klosterman S."/>
            <person name="Schueller C."/>
            <person name="Chalwatzis N."/>
        </authorList>
    </citation>
    <scope>NUCLEOTIDE SEQUENCE [LARGE SCALE GENOMIC DNA]</scope>
    <source>
        <strain>cv. Columbia</strain>
    </source>
</reference>
<reference key="2">
    <citation type="journal article" date="1999" name="Nature">
        <title>Sequence and analysis of chromosome 4 of the plant Arabidopsis thaliana.</title>
        <authorList>
            <person name="Mayer K.F.X."/>
            <person name="Schueller C."/>
            <person name="Wambutt R."/>
            <person name="Murphy G."/>
            <person name="Volckaert G."/>
            <person name="Pohl T."/>
            <person name="Duesterhoeft A."/>
            <person name="Stiekema W."/>
            <person name="Entian K.-D."/>
            <person name="Terryn N."/>
            <person name="Harris B."/>
            <person name="Ansorge W."/>
            <person name="Brandt P."/>
            <person name="Grivell L.A."/>
            <person name="Rieger M."/>
            <person name="Weichselgartner M."/>
            <person name="de Simone V."/>
            <person name="Obermaier B."/>
            <person name="Mache R."/>
            <person name="Mueller M."/>
            <person name="Kreis M."/>
            <person name="Delseny M."/>
            <person name="Puigdomenech P."/>
            <person name="Watson M."/>
            <person name="Schmidtheini T."/>
            <person name="Reichert B."/>
            <person name="Portetelle D."/>
            <person name="Perez-Alonso M."/>
            <person name="Boutry M."/>
            <person name="Bancroft I."/>
            <person name="Vos P."/>
            <person name="Hoheisel J."/>
            <person name="Zimmermann W."/>
            <person name="Wedler H."/>
            <person name="Ridley P."/>
            <person name="Langham S.-A."/>
            <person name="McCullagh B."/>
            <person name="Bilham L."/>
            <person name="Robben J."/>
            <person name="van der Schueren J."/>
            <person name="Grymonprez B."/>
            <person name="Chuang Y.-J."/>
            <person name="Vandenbussche F."/>
            <person name="Braeken M."/>
            <person name="Weltjens I."/>
            <person name="Voet M."/>
            <person name="Bastiaens I."/>
            <person name="Aert R."/>
            <person name="Defoor E."/>
            <person name="Weitzenegger T."/>
            <person name="Bothe G."/>
            <person name="Ramsperger U."/>
            <person name="Hilbert H."/>
            <person name="Braun M."/>
            <person name="Holzer E."/>
            <person name="Brandt A."/>
            <person name="Peters S."/>
            <person name="van Staveren M."/>
            <person name="Dirkse W."/>
            <person name="Mooijman P."/>
            <person name="Klein Lankhorst R."/>
            <person name="Rose M."/>
            <person name="Hauf J."/>
            <person name="Koetter P."/>
            <person name="Berneiser S."/>
            <person name="Hempel S."/>
            <person name="Feldpausch M."/>
            <person name="Lamberth S."/>
            <person name="Van den Daele H."/>
            <person name="De Keyser A."/>
            <person name="Buysshaert C."/>
            <person name="Gielen J."/>
            <person name="Villarroel R."/>
            <person name="De Clercq R."/>
            <person name="van Montagu M."/>
            <person name="Rogers J."/>
            <person name="Cronin A."/>
            <person name="Quail M.A."/>
            <person name="Bray-Allen S."/>
            <person name="Clark L."/>
            <person name="Doggett J."/>
            <person name="Hall S."/>
            <person name="Kay M."/>
            <person name="Lennard N."/>
            <person name="McLay K."/>
            <person name="Mayes R."/>
            <person name="Pettett A."/>
            <person name="Rajandream M.A."/>
            <person name="Lyne M."/>
            <person name="Benes V."/>
            <person name="Rechmann S."/>
            <person name="Borkova D."/>
            <person name="Bloecker H."/>
            <person name="Scharfe M."/>
            <person name="Grimm M."/>
            <person name="Loehnert T.-H."/>
            <person name="Dose S."/>
            <person name="de Haan M."/>
            <person name="Maarse A.C."/>
            <person name="Schaefer M."/>
            <person name="Mueller-Auer S."/>
            <person name="Gabel C."/>
            <person name="Fuchs M."/>
            <person name="Fartmann B."/>
            <person name="Granderath K."/>
            <person name="Dauner D."/>
            <person name="Herzl A."/>
            <person name="Neumann S."/>
            <person name="Argiriou A."/>
            <person name="Vitale D."/>
            <person name="Liguori R."/>
            <person name="Piravandi E."/>
            <person name="Massenet O."/>
            <person name="Quigley F."/>
            <person name="Clabauld G."/>
            <person name="Muendlein A."/>
            <person name="Felber R."/>
            <person name="Schnabl S."/>
            <person name="Hiller R."/>
            <person name="Schmidt W."/>
            <person name="Lecharny A."/>
            <person name="Aubourg S."/>
            <person name="Chefdor F."/>
            <person name="Cooke R."/>
            <person name="Berger C."/>
            <person name="Monfort A."/>
            <person name="Casacuberta E."/>
            <person name="Gibbons T."/>
            <person name="Weber N."/>
            <person name="Vandenbol M."/>
            <person name="Bargues M."/>
            <person name="Terol J."/>
            <person name="Torres A."/>
            <person name="Perez-Perez A."/>
            <person name="Purnelle B."/>
            <person name="Bent E."/>
            <person name="Johnson S."/>
            <person name="Tacon D."/>
            <person name="Jesse T."/>
            <person name="Heijnen L."/>
            <person name="Schwarz S."/>
            <person name="Scholler P."/>
            <person name="Heber S."/>
            <person name="Francs P."/>
            <person name="Bielke C."/>
            <person name="Frishman D."/>
            <person name="Haase D."/>
            <person name="Lemcke K."/>
            <person name="Mewes H.-W."/>
            <person name="Stocker S."/>
            <person name="Zaccaria P."/>
            <person name="Bevan M."/>
            <person name="Wilson R.K."/>
            <person name="de la Bastide M."/>
            <person name="Habermann K."/>
            <person name="Parnell L."/>
            <person name="Dedhia N."/>
            <person name="Gnoj L."/>
            <person name="Schutz K."/>
            <person name="Huang E."/>
            <person name="Spiegel L."/>
            <person name="Sekhon M."/>
            <person name="Murray J."/>
            <person name="Sheet P."/>
            <person name="Cordes M."/>
            <person name="Abu-Threideh J."/>
            <person name="Stoneking T."/>
            <person name="Kalicki J."/>
            <person name="Graves T."/>
            <person name="Harmon G."/>
            <person name="Edwards J."/>
            <person name="Latreille P."/>
            <person name="Courtney L."/>
            <person name="Cloud J."/>
            <person name="Abbott A."/>
            <person name="Scott K."/>
            <person name="Johnson D."/>
            <person name="Minx P."/>
            <person name="Bentley D."/>
            <person name="Fulton B."/>
            <person name="Miller N."/>
            <person name="Greco T."/>
            <person name="Kemp K."/>
            <person name="Kramer J."/>
            <person name="Fulton L."/>
            <person name="Mardis E."/>
            <person name="Dante M."/>
            <person name="Pepin K."/>
            <person name="Hillier L.W."/>
            <person name="Nelson J."/>
            <person name="Spieth J."/>
            <person name="Ryan E."/>
            <person name="Andrews S."/>
            <person name="Geisel C."/>
            <person name="Layman D."/>
            <person name="Du H."/>
            <person name="Ali J."/>
            <person name="Berghoff A."/>
            <person name="Jones K."/>
            <person name="Drone K."/>
            <person name="Cotton M."/>
            <person name="Joshu C."/>
            <person name="Antonoiu B."/>
            <person name="Zidanic M."/>
            <person name="Strong C."/>
            <person name="Sun H."/>
            <person name="Lamar B."/>
            <person name="Yordan C."/>
            <person name="Ma P."/>
            <person name="Zhong J."/>
            <person name="Preston R."/>
            <person name="Vil D."/>
            <person name="Shekher M."/>
            <person name="Matero A."/>
            <person name="Shah R."/>
            <person name="Swaby I.K."/>
            <person name="O'Shaughnessy A."/>
            <person name="Rodriguez M."/>
            <person name="Hoffman J."/>
            <person name="Till S."/>
            <person name="Granat S."/>
            <person name="Shohdy N."/>
            <person name="Hasegawa A."/>
            <person name="Hameed A."/>
            <person name="Lodhi M."/>
            <person name="Johnson A."/>
            <person name="Chen E."/>
            <person name="Marra M.A."/>
            <person name="Martienssen R."/>
            <person name="McCombie W.R."/>
        </authorList>
    </citation>
    <scope>NUCLEOTIDE SEQUENCE [LARGE SCALE GENOMIC DNA]</scope>
    <source>
        <strain>cv. Columbia</strain>
    </source>
</reference>
<reference key="3">
    <citation type="journal article" date="2017" name="Plant J.">
        <title>Araport11: a complete reannotation of the Arabidopsis thaliana reference genome.</title>
        <authorList>
            <person name="Cheng C.Y."/>
            <person name="Krishnakumar V."/>
            <person name="Chan A.P."/>
            <person name="Thibaud-Nissen F."/>
            <person name="Schobel S."/>
            <person name="Town C.D."/>
        </authorList>
    </citation>
    <scope>GENOME REANNOTATION</scope>
    <source>
        <strain>cv. Columbia</strain>
    </source>
</reference>
<name>CLPB2_ARATH</name>
<protein>
    <recommendedName>
        <fullName>Putative chaperone protein ClpB2, chloroplastic</fullName>
    </recommendedName>
    <alternativeName>
        <fullName>ATP-dependent Clp protease ATP-binding subunit ClpB homolog 2</fullName>
    </alternativeName>
    <alternativeName>
        <fullName>Casein lytic proteinase B2</fullName>
    </alternativeName>
</protein>
<keyword id="KW-0067">ATP-binding</keyword>
<keyword id="KW-0175">Coiled coil</keyword>
<keyword id="KW-0547">Nucleotide-binding</keyword>
<keyword id="KW-1185">Reference proteome</keyword>
<keyword id="KW-0677">Repeat</keyword>
<comment type="similarity">
    <text evidence="4">Belongs to the ClpA/ClpB family.</text>
</comment>
<comment type="caution">
    <text evidence="4">Lacks the C-terminal domain, which is a conserved feature of the family.</text>
</comment>
<comment type="sequence caution" evidence="4">
    <conflict type="erroneous gene model prediction">
        <sequence resource="EMBL-CDS" id="CAB46061"/>
    </conflict>
</comment>
<comment type="sequence caution" evidence="4">
    <conflict type="erroneous gene model prediction">
        <sequence resource="EMBL-CDS" id="CAB78509"/>
    </conflict>
</comment>
<proteinExistence type="inferred from homology"/>